<accession>Q1PEY6</accession>
<accession>O22933</accession>
<keyword id="KW-0025">Alternative splicing</keyword>
<keyword id="KW-0217">Developmental protein</keyword>
<keyword id="KW-1015">Disulfide bond</keyword>
<keyword id="KW-1185">Reference proteome</keyword>
<keyword id="KW-0964">Secreted</keyword>
<keyword id="KW-0732">Signal</keyword>
<proteinExistence type="evidence at protein level"/>
<gene>
    <name evidence="7" type="primary">EPFL6</name>
    <name evidence="8" type="synonym">CHAL</name>
    <name evidence="11" type="ordered locus">At2g30370</name>
    <name type="ORF">T9D9.18</name>
</gene>
<comment type="function">
    <text evidence="2 3 5 6">Acts primarily as positive regulator of inflorescence growth. Endodermal expression is sufficient for proper inflorescence architecture (PubMed:22474391). Redundantly involved with EPFL4 in procambial development regulation. Also acts as tissue-specific regulator of epidermal pattern. Controls stomatal patterning by repressing stomatal production. TMM (AC Q9SSD1) functions to dampen or block CHAL signaling. Not processed by SDD1 (AC O64495). Acts as growth-regulatory ligand for ERECTA family receptors.</text>
</comment>
<comment type="subunit">
    <text evidence="5">Interacts with ERECTA.</text>
</comment>
<comment type="subcellular location">
    <subcellularLocation>
        <location evidence="10">Secreted</location>
    </subcellularLocation>
</comment>
<comment type="alternative products">
    <event type="alternative splicing"/>
    <isoform>
        <id>Q1PEY6-1</id>
        <name>1</name>
        <sequence type="displayed"/>
    </isoform>
    <isoform>
        <id>Q1PEY6-2</id>
        <name>2</name>
        <sequence type="described" ref="VSP_038808"/>
    </isoform>
</comment>
<comment type="tissue specificity">
    <text evidence="2 3 4">Expressed in the internal layers of the root, hypocotyl and stems, and in the midrib of developing rosette leaves. Detected in a ring of cells surrounding the vascular elements. Expressed in developing stems soon after bolting, in inflorescence stems, near the root apex and in the chalazal region of ovules. Not found in cotyledons or in stomatal precursors or stomata.</text>
</comment>
<comment type="disruption phenotype">
    <text evidence="2 3 5">No visible phenotype in wild-type background, but restores stomata to hypocotyls in a tmm background. Chal and cll2 double mutants are defective in growth, with a short stature, shortened pedicells and compact inflorescence.</text>
</comment>
<comment type="similarity">
    <text evidence="10">Belongs to the plant cysteine rich small secretory peptide family. Epidermal patterning factor subfamily.</text>
</comment>
<protein>
    <recommendedName>
        <fullName evidence="7">EPIDERMAL PATTERNING FACTOR-like protein 6</fullName>
        <shortName>EPF-like protein 6</shortName>
    </recommendedName>
    <component>
        <recommendedName>
            <fullName evidence="9">CHALLAH</fullName>
        </recommendedName>
    </component>
</protein>
<name>EPFL6_ARATH</name>
<feature type="signal peptide" evidence="1">
    <location>
        <begin position="1"/>
        <end position="47"/>
    </location>
</feature>
<feature type="chain" id="PRO_0000392504" description="EPIDERMAL PATTERNING FACTOR-like protein 6">
    <location>
        <begin position="48"/>
        <end position="156"/>
    </location>
</feature>
<feature type="chain" id="PRO_0000430512" description="CHALLAH" evidence="9">
    <location>
        <begin position="106"/>
        <end position="156"/>
    </location>
</feature>
<feature type="disulfide bond" evidence="9">
    <location>
        <begin position="113"/>
        <end position="147"/>
    </location>
</feature>
<feature type="disulfide bond" evidence="9">
    <location>
        <begin position="117"/>
        <end position="123"/>
    </location>
</feature>
<feature type="disulfide bond" evidence="9">
    <location>
        <begin position="120"/>
        <end position="149"/>
    </location>
</feature>
<feature type="splice variant" id="VSP_038808" description="In isoform 2." evidence="10">
    <original>YNRNSNSGTLGNFYAKEEGKSTVVIKKTRKIGDRSKEAELRRILRGLGSSPPRCSSKCGRCTPCKPVHVPVPPGTPVTAEYYPEAWRCKCGNKLYMP</original>
    <variation>FSDCDGMSRLTGHAEMPCTPKEILSRRIGFSAHEDKDSTQLLVRSPLVGPCLAYDLDRVVILAPTVHVNV</variation>
    <location>
        <begin position="60"/>
        <end position="156"/>
    </location>
</feature>
<feature type="mutagenesis site" description="In chal-1; derepress stomatal production in a specific subset of tissues." evidence="2">
    <original>P</original>
    <variation>S</variation>
    <location>
        <position position="122"/>
    </location>
</feature>
<organism>
    <name type="scientific">Arabidopsis thaliana</name>
    <name type="common">Mouse-ear cress</name>
    <dbReference type="NCBI Taxonomy" id="3702"/>
    <lineage>
        <taxon>Eukaryota</taxon>
        <taxon>Viridiplantae</taxon>
        <taxon>Streptophyta</taxon>
        <taxon>Embryophyta</taxon>
        <taxon>Tracheophyta</taxon>
        <taxon>Spermatophyta</taxon>
        <taxon>Magnoliopsida</taxon>
        <taxon>eudicotyledons</taxon>
        <taxon>Gunneridae</taxon>
        <taxon>Pentapetalae</taxon>
        <taxon>rosids</taxon>
        <taxon>malvids</taxon>
        <taxon>Brassicales</taxon>
        <taxon>Brassicaceae</taxon>
        <taxon>Camelineae</taxon>
        <taxon>Arabidopsis</taxon>
    </lineage>
</organism>
<evidence type="ECO:0000255" key="1"/>
<evidence type="ECO:0000269" key="2">
    <source>
    </source>
</evidence>
<evidence type="ECO:0000269" key="3">
    <source>
    </source>
</evidence>
<evidence type="ECO:0000269" key="4">
    <source>
    </source>
</evidence>
<evidence type="ECO:0000269" key="5">
    <source>
    </source>
</evidence>
<evidence type="ECO:0000269" key="6">
    <source>
    </source>
</evidence>
<evidence type="ECO:0000303" key="7">
    <source>
    </source>
</evidence>
<evidence type="ECO:0000303" key="8">
    <source>
    </source>
</evidence>
<evidence type="ECO:0000303" key="9">
    <source>
    </source>
</evidence>
<evidence type="ECO:0000305" key="10"/>
<evidence type="ECO:0000312" key="11">
    <source>
        <dbReference type="Araport" id="AT2G30370"/>
    </source>
</evidence>
<reference key="1">
    <citation type="journal article" date="1999" name="Nature">
        <title>Sequence and analysis of chromosome 2 of the plant Arabidopsis thaliana.</title>
        <authorList>
            <person name="Lin X."/>
            <person name="Kaul S."/>
            <person name="Rounsley S.D."/>
            <person name="Shea T.P."/>
            <person name="Benito M.-I."/>
            <person name="Town C.D."/>
            <person name="Fujii C.Y."/>
            <person name="Mason T.M."/>
            <person name="Bowman C.L."/>
            <person name="Barnstead M.E."/>
            <person name="Feldblyum T.V."/>
            <person name="Buell C.R."/>
            <person name="Ketchum K.A."/>
            <person name="Lee J.J."/>
            <person name="Ronning C.M."/>
            <person name="Koo H.L."/>
            <person name="Moffat K.S."/>
            <person name="Cronin L.A."/>
            <person name="Shen M."/>
            <person name="Pai G."/>
            <person name="Van Aken S."/>
            <person name="Umayam L."/>
            <person name="Tallon L.J."/>
            <person name="Gill J.E."/>
            <person name="Adams M.D."/>
            <person name="Carrera A.J."/>
            <person name="Creasy T.H."/>
            <person name="Goodman H.M."/>
            <person name="Somerville C.R."/>
            <person name="Copenhaver G.P."/>
            <person name="Preuss D."/>
            <person name="Nierman W.C."/>
            <person name="White O."/>
            <person name="Eisen J.A."/>
            <person name="Salzberg S.L."/>
            <person name="Fraser C.M."/>
            <person name="Venter J.C."/>
        </authorList>
    </citation>
    <scope>NUCLEOTIDE SEQUENCE [LARGE SCALE GENOMIC DNA]</scope>
    <source>
        <strain>cv. Columbia</strain>
    </source>
</reference>
<reference key="2">
    <citation type="journal article" date="2017" name="Plant J.">
        <title>Araport11: a complete reannotation of the Arabidopsis thaliana reference genome.</title>
        <authorList>
            <person name="Cheng C.Y."/>
            <person name="Krishnakumar V."/>
            <person name="Chan A.P."/>
            <person name="Thibaud-Nissen F."/>
            <person name="Schobel S."/>
            <person name="Town C.D."/>
        </authorList>
    </citation>
    <scope>GENOME REANNOTATION</scope>
    <source>
        <strain>cv. Columbia</strain>
    </source>
</reference>
<reference key="3">
    <citation type="journal article" date="2006" name="Plant Biotechnol. J.">
        <title>Simultaneous high-throughput recombinational cloning of open reading frames in closed and open configurations.</title>
        <authorList>
            <person name="Underwood B.A."/>
            <person name="Vanderhaeghen R."/>
            <person name="Whitford R."/>
            <person name="Town C.D."/>
            <person name="Hilson P."/>
        </authorList>
    </citation>
    <scope>NUCLEOTIDE SEQUENCE [LARGE SCALE MRNA] (ISOFORM 1)</scope>
    <source>
        <strain>cv. Columbia</strain>
    </source>
</reference>
<reference key="4">
    <citation type="journal article" date="2009" name="Plant Cell Physiol.">
        <title>Epidermal cell density is autoregulated via a secretory peptide, EPIDERMAL PATTERNING FACTOR 2 in Arabidopsis leaves.</title>
        <authorList>
            <person name="Hara K."/>
            <person name="Yokoo T."/>
            <person name="Kajita R."/>
            <person name="Onishi T."/>
            <person name="Yahata S."/>
            <person name="Peterson K.M."/>
            <person name="Torii K.U."/>
            <person name="Kakimoto T."/>
        </authorList>
    </citation>
    <scope>GENE FAMILY</scope>
    <scope>NOMENCLATURE</scope>
</reference>
<reference key="5">
    <citation type="journal article" date="2010" name="Development">
        <title>Regional specification of stomatal production by the putative ligand CHALLAH.</title>
        <authorList>
            <person name="Abrash E.B."/>
            <person name="Bergmann D.C."/>
        </authorList>
    </citation>
    <scope>FUNCTION</scope>
    <scope>MUTAGENESIS OF PRO-122</scope>
    <scope>DISRUPTION PHENOTYPE</scope>
    <scope>TISSUE SPECIFICITY</scope>
    <source>
        <strain>cv. Columbia</strain>
    </source>
</reference>
<reference key="6">
    <citation type="journal article" date="2011" name="Plant Cell">
        <title>Generation of signaling specificity in Arabidopsis by spatially restricted buffering of ligand-receptor interactions.</title>
        <authorList>
            <person name="Abrash E.B."/>
            <person name="Davies K.A."/>
            <person name="Bergmann D.C."/>
        </authorList>
    </citation>
    <scope>FUNCTION</scope>
    <scope>TISSUE SPECIFICITY</scope>
    <scope>DISRUPTION PHENOTYPE</scope>
</reference>
<reference key="7">
    <citation type="journal article" date="2011" name="Nat. Commun.">
        <title>The NMR structure of stomagen reveals the basis of stomatal density regulation by plant peptide hormones.</title>
        <authorList>
            <person name="Ohki S."/>
            <person name="Takeuchi M."/>
            <person name="Mori M."/>
        </authorList>
    </citation>
    <scope>3D-STRUCTURE MODELING</scope>
    <scope>DISULFIDE BOND</scope>
</reference>
<reference key="8">
    <citation type="journal article" date="2012" name="Proc. Natl. Acad. Sci. U.S.A.">
        <title>Regulation of inflorescence architecture by intertissue layer ligand-receptor communication between endodermis and phloem.</title>
        <authorList>
            <person name="Uchida N."/>
            <person name="Lee J.S."/>
            <person name="Horst R.J."/>
            <person name="Lai H.H."/>
            <person name="Kajita R."/>
            <person name="Kakimoto T."/>
            <person name="Tasaka M."/>
            <person name="Torii K.U."/>
        </authorList>
    </citation>
    <scope>FUNCTION</scope>
    <scope>TISSUE SPECIFICITY</scope>
    <scope>DISRUPTION PHENOTYPE</scope>
    <scope>INTERACTION WITH ERECTA</scope>
</reference>
<reference key="9">
    <citation type="journal article" date="2013" name="J. Exp. Bot.">
        <title>Regulation of plant vascular stem cells by endodermis-derived EPFL-family peptide hormones and phloem-expressed ERECTA-family receptor kinases.</title>
        <authorList>
            <person name="Uchida N."/>
            <person name="Tasaka M."/>
        </authorList>
    </citation>
    <scope>FUNCTION</scope>
</reference>
<sequence>MGFERTSSSLSLLSSSLPSSLQPSENTRAKFSLFYLLLLFFVLCVIATFTITPTSTSSPYNRNSNSGTLGNFYAKEEGKSTVVIKKTRKIGDRSKEAELRRILRGLGSSPPRCSSKCGRCTPCKPVHVPVPPGTPVTAEYYPEAWRCKCGNKLYMP</sequence>
<dbReference type="EMBL" id="AC002338">
    <property type="protein sequence ID" value="AAC16939.1"/>
    <property type="molecule type" value="Genomic_DNA"/>
</dbReference>
<dbReference type="EMBL" id="CP002685">
    <property type="protein sequence ID" value="AEC08377.1"/>
    <property type="molecule type" value="Genomic_DNA"/>
</dbReference>
<dbReference type="EMBL" id="DQ446581">
    <property type="protein sequence ID" value="ABE65875.1"/>
    <property type="molecule type" value="mRNA"/>
</dbReference>
<dbReference type="PIR" id="F84707">
    <property type="entry name" value="F84707"/>
</dbReference>
<dbReference type="RefSeq" id="NP_001189638.1">
    <molecule id="Q1PEY6-1"/>
    <property type="nucleotide sequence ID" value="NM_001202709.2"/>
</dbReference>
<dbReference type="BioGRID" id="2936">
    <property type="interactions" value="4"/>
</dbReference>
<dbReference type="FunCoup" id="Q1PEY6">
    <property type="interactions" value="1"/>
</dbReference>
<dbReference type="IntAct" id="Q1PEY6">
    <property type="interactions" value="1"/>
</dbReference>
<dbReference type="STRING" id="3702.Q1PEY6"/>
<dbReference type="EnsemblPlants" id="AT2G30370.2">
    <molecule id="Q1PEY6-1"/>
    <property type="protein sequence ID" value="AT2G30370.2"/>
    <property type="gene ID" value="AT2G30370"/>
</dbReference>
<dbReference type="GeneID" id="817587"/>
<dbReference type="Gramene" id="AT2G30370.2">
    <molecule id="Q1PEY6-1"/>
    <property type="protein sequence ID" value="AT2G30370.2"/>
    <property type="gene ID" value="AT2G30370"/>
</dbReference>
<dbReference type="KEGG" id="ath:AT2G30370"/>
<dbReference type="Araport" id="AT2G30370"/>
<dbReference type="TAIR" id="AT2G30370">
    <property type="gene designation" value="CHAL"/>
</dbReference>
<dbReference type="eggNOG" id="ENOG502S3PD">
    <property type="taxonomic scope" value="Eukaryota"/>
</dbReference>
<dbReference type="HOGENOM" id="CLU_135272_3_1_1"/>
<dbReference type="InParanoid" id="Q1PEY6"/>
<dbReference type="OrthoDB" id="1937916at2759"/>
<dbReference type="PRO" id="PR:Q1PEY6"/>
<dbReference type="Proteomes" id="UP000006548">
    <property type="component" value="Chromosome 2"/>
</dbReference>
<dbReference type="ExpressionAtlas" id="Q1PEY6">
    <property type="expression patterns" value="baseline and differential"/>
</dbReference>
<dbReference type="GO" id="GO:0005576">
    <property type="term" value="C:extracellular region"/>
    <property type="evidence" value="ECO:0007669"/>
    <property type="project" value="UniProtKB-SubCell"/>
</dbReference>
<dbReference type="GO" id="GO:0010052">
    <property type="term" value="P:guard cell differentiation"/>
    <property type="evidence" value="ECO:0000250"/>
    <property type="project" value="UniProtKB"/>
</dbReference>
<dbReference type="GO" id="GO:0010374">
    <property type="term" value="P:stomatal complex development"/>
    <property type="evidence" value="ECO:0000250"/>
    <property type="project" value="UniProtKB"/>
</dbReference>
<dbReference type="InterPro" id="IPR039455">
    <property type="entry name" value="EPFL"/>
</dbReference>
<dbReference type="PANTHER" id="PTHR33109">
    <property type="entry name" value="EPIDERMAL PATTERNING FACTOR-LIKE PROTEIN 4"/>
    <property type="match status" value="1"/>
</dbReference>
<dbReference type="PANTHER" id="PTHR33109:SF4">
    <property type="entry name" value="EPIDERMAL PATTERNING FACTOR-LIKE PROTEIN 6"/>
    <property type="match status" value="1"/>
</dbReference>
<dbReference type="Pfam" id="PF17181">
    <property type="entry name" value="EPF"/>
    <property type="match status" value="1"/>
</dbReference>